<gene>
    <name evidence="1" type="primary">hscB</name>
    <name type="ordered locus">SFV_2575</name>
</gene>
<reference key="1">
    <citation type="journal article" date="2006" name="BMC Genomics">
        <title>Complete genome sequence of Shigella flexneri 5b and comparison with Shigella flexneri 2a.</title>
        <authorList>
            <person name="Nie H."/>
            <person name="Yang F."/>
            <person name="Zhang X."/>
            <person name="Yang J."/>
            <person name="Chen L."/>
            <person name="Wang J."/>
            <person name="Xiong Z."/>
            <person name="Peng J."/>
            <person name="Sun L."/>
            <person name="Dong J."/>
            <person name="Xue Y."/>
            <person name="Xu X."/>
            <person name="Chen S."/>
            <person name="Yao Z."/>
            <person name="Shen Y."/>
            <person name="Jin Q."/>
        </authorList>
    </citation>
    <scope>NUCLEOTIDE SEQUENCE [LARGE SCALE GENOMIC DNA]</scope>
    <source>
        <strain>8401</strain>
    </source>
</reference>
<evidence type="ECO:0000255" key="1">
    <source>
        <dbReference type="HAMAP-Rule" id="MF_00682"/>
    </source>
</evidence>
<comment type="function">
    <text evidence="1">Co-chaperone involved in the maturation of iron-sulfur cluster-containing proteins. Seems to help targeting proteins to be folded toward HscA.</text>
</comment>
<comment type="subunit">
    <text evidence="1">Interacts with HscA and stimulates its ATPase activity. Interacts with IscU.</text>
</comment>
<comment type="similarity">
    <text evidence="1">Belongs to the HscB family.</text>
</comment>
<proteinExistence type="inferred from homology"/>
<protein>
    <recommendedName>
        <fullName evidence="1">Co-chaperone protein HscB</fullName>
    </recommendedName>
    <alternativeName>
        <fullName evidence="1">Hsc20</fullName>
    </alternativeName>
</protein>
<name>HSCB_SHIF8</name>
<dbReference type="EMBL" id="CP000266">
    <property type="protein sequence ID" value="ABF04673.1"/>
    <property type="molecule type" value="Genomic_DNA"/>
</dbReference>
<dbReference type="RefSeq" id="WP_000384405.1">
    <property type="nucleotide sequence ID" value="NC_008258.1"/>
</dbReference>
<dbReference type="SMR" id="Q0T1Z2"/>
<dbReference type="KEGG" id="sfv:SFV_2575"/>
<dbReference type="HOGENOM" id="CLU_068529_2_0_6"/>
<dbReference type="Proteomes" id="UP000000659">
    <property type="component" value="Chromosome"/>
</dbReference>
<dbReference type="GO" id="GO:1990230">
    <property type="term" value="C:iron-sulfur cluster transfer complex"/>
    <property type="evidence" value="ECO:0007669"/>
    <property type="project" value="TreeGrafter"/>
</dbReference>
<dbReference type="GO" id="GO:0001671">
    <property type="term" value="F:ATPase activator activity"/>
    <property type="evidence" value="ECO:0007669"/>
    <property type="project" value="InterPro"/>
</dbReference>
<dbReference type="GO" id="GO:0051087">
    <property type="term" value="F:protein-folding chaperone binding"/>
    <property type="evidence" value="ECO:0007669"/>
    <property type="project" value="InterPro"/>
</dbReference>
<dbReference type="GO" id="GO:0044571">
    <property type="term" value="P:[2Fe-2S] cluster assembly"/>
    <property type="evidence" value="ECO:0007669"/>
    <property type="project" value="InterPro"/>
</dbReference>
<dbReference type="GO" id="GO:0051259">
    <property type="term" value="P:protein complex oligomerization"/>
    <property type="evidence" value="ECO:0007669"/>
    <property type="project" value="InterPro"/>
</dbReference>
<dbReference type="GO" id="GO:0006457">
    <property type="term" value="P:protein folding"/>
    <property type="evidence" value="ECO:0007669"/>
    <property type="project" value="UniProtKB-UniRule"/>
</dbReference>
<dbReference type="CDD" id="cd06257">
    <property type="entry name" value="DnaJ"/>
    <property type="match status" value="1"/>
</dbReference>
<dbReference type="FunFam" id="1.10.287.110:FF:000008">
    <property type="entry name" value="Co-chaperone protein HscB"/>
    <property type="match status" value="1"/>
</dbReference>
<dbReference type="FunFam" id="1.20.1280.20:FF:000001">
    <property type="entry name" value="Co-chaperone protein HscB"/>
    <property type="match status" value="1"/>
</dbReference>
<dbReference type="Gene3D" id="1.10.287.110">
    <property type="entry name" value="DnaJ domain"/>
    <property type="match status" value="1"/>
</dbReference>
<dbReference type="Gene3D" id="1.20.1280.20">
    <property type="entry name" value="HscB, C-terminal domain"/>
    <property type="match status" value="1"/>
</dbReference>
<dbReference type="HAMAP" id="MF_00682">
    <property type="entry name" value="HscB"/>
    <property type="match status" value="1"/>
</dbReference>
<dbReference type="InterPro" id="IPR001623">
    <property type="entry name" value="DnaJ_domain"/>
</dbReference>
<dbReference type="InterPro" id="IPR004640">
    <property type="entry name" value="HscB"/>
</dbReference>
<dbReference type="InterPro" id="IPR036386">
    <property type="entry name" value="HscB_C_sf"/>
</dbReference>
<dbReference type="InterPro" id="IPR009073">
    <property type="entry name" value="HscB_oligo_C"/>
</dbReference>
<dbReference type="InterPro" id="IPR036869">
    <property type="entry name" value="J_dom_sf"/>
</dbReference>
<dbReference type="NCBIfam" id="TIGR00714">
    <property type="entry name" value="hscB"/>
    <property type="match status" value="1"/>
</dbReference>
<dbReference type="NCBIfam" id="NF003449">
    <property type="entry name" value="PRK05014.1"/>
    <property type="match status" value="1"/>
</dbReference>
<dbReference type="PANTHER" id="PTHR14021">
    <property type="entry name" value="IRON-SULFUR CLUSTER CO-CHAPERONE PROTEIN HSCB"/>
    <property type="match status" value="1"/>
</dbReference>
<dbReference type="PANTHER" id="PTHR14021:SF15">
    <property type="entry name" value="IRON-SULFUR CLUSTER CO-CHAPERONE PROTEIN HSCB"/>
    <property type="match status" value="1"/>
</dbReference>
<dbReference type="Pfam" id="PF07743">
    <property type="entry name" value="HSCB_C"/>
    <property type="match status" value="1"/>
</dbReference>
<dbReference type="SMART" id="SM00271">
    <property type="entry name" value="DnaJ"/>
    <property type="match status" value="1"/>
</dbReference>
<dbReference type="SUPFAM" id="SSF46565">
    <property type="entry name" value="Chaperone J-domain"/>
    <property type="match status" value="1"/>
</dbReference>
<dbReference type="SUPFAM" id="SSF47144">
    <property type="entry name" value="HSC20 (HSCB), C-terminal oligomerisation domain"/>
    <property type="match status" value="1"/>
</dbReference>
<dbReference type="PROSITE" id="PS50076">
    <property type="entry name" value="DNAJ_2"/>
    <property type="match status" value="1"/>
</dbReference>
<accession>Q0T1Z2</accession>
<organism>
    <name type="scientific">Shigella flexneri serotype 5b (strain 8401)</name>
    <dbReference type="NCBI Taxonomy" id="373384"/>
    <lineage>
        <taxon>Bacteria</taxon>
        <taxon>Pseudomonadati</taxon>
        <taxon>Pseudomonadota</taxon>
        <taxon>Gammaproteobacteria</taxon>
        <taxon>Enterobacterales</taxon>
        <taxon>Enterobacteriaceae</taxon>
        <taxon>Shigella</taxon>
    </lineage>
</organism>
<sequence>MDYFTLFGLPARYQLDTQALSLRFQDLQRQYHPDKFASGSLAEQLAAVQQSATINQAWQTLRHPLMRAEYLLSLHGFDLASEQHTVRDTAFLMEQLELREELDEIEQAKDEARLESFIKRVKKMFDTRHQLMVEQLDNEAWDAAADTVRKLRFLDKLRSSAEQLEEKLLDF</sequence>
<feature type="chain" id="PRO_1000083049" description="Co-chaperone protein HscB">
    <location>
        <begin position="1"/>
        <end position="171"/>
    </location>
</feature>
<feature type="domain" description="J" evidence="1">
    <location>
        <begin position="2"/>
        <end position="74"/>
    </location>
</feature>
<keyword id="KW-0143">Chaperone</keyword>